<dbReference type="EC" id="3.6.4.-" evidence="1"/>
<dbReference type="EMBL" id="U60493">
    <property type="protein sequence ID" value="AAB40089.1"/>
    <property type="molecule type" value="Genomic_DNA"/>
</dbReference>
<dbReference type="SMR" id="P93374"/>
<dbReference type="STRING" id="4097.P93374"/>
<dbReference type="PaxDb" id="4097-P93374"/>
<dbReference type="Proteomes" id="UP000084051">
    <property type="component" value="Unplaced"/>
</dbReference>
<dbReference type="GO" id="GO:0015629">
    <property type="term" value="C:actin cytoskeleton"/>
    <property type="evidence" value="ECO:0000318"/>
    <property type="project" value="GO_Central"/>
</dbReference>
<dbReference type="GO" id="GO:0005737">
    <property type="term" value="C:cytoplasm"/>
    <property type="evidence" value="ECO:0007669"/>
    <property type="project" value="UniProtKB-KW"/>
</dbReference>
<dbReference type="GO" id="GO:0005524">
    <property type="term" value="F:ATP binding"/>
    <property type="evidence" value="ECO:0007669"/>
    <property type="project" value="UniProtKB-KW"/>
</dbReference>
<dbReference type="GO" id="GO:0016787">
    <property type="term" value="F:hydrolase activity"/>
    <property type="evidence" value="ECO:0007669"/>
    <property type="project" value="UniProtKB-KW"/>
</dbReference>
<dbReference type="CDD" id="cd10224">
    <property type="entry name" value="ASKHA_NBD_actin"/>
    <property type="match status" value="1"/>
</dbReference>
<dbReference type="FunFam" id="2.30.36.70:FF:000001">
    <property type="entry name" value="Actin, alpha skeletal muscle"/>
    <property type="match status" value="1"/>
</dbReference>
<dbReference type="FunFam" id="3.30.420.40:FF:000291">
    <property type="entry name" value="Actin, alpha skeletal muscle"/>
    <property type="match status" value="1"/>
</dbReference>
<dbReference type="FunFam" id="3.90.640.10:FF:000001">
    <property type="entry name" value="Actin, muscle"/>
    <property type="match status" value="1"/>
</dbReference>
<dbReference type="FunFam" id="3.30.420.40:FF:000404">
    <property type="entry name" value="Major actin"/>
    <property type="match status" value="1"/>
</dbReference>
<dbReference type="Gene3D" id="3.30.420.40">
    <property type="match status" value="2"/>
</dbReference>
<dbReference type="Gene3D" id="3.90.640.10">
    <property type="entry name" value="Actin, Chain A, domain 4"/>
    <property type="match status" value="1"/>
</dbReference>
<dbReference type="InterPro" id="IPR004000">
    <property type="entry name" value="Actin"/>
</dbReference>
<dbReference type="InterPro" id="IPR020902">
    <property type="entry name" value="Actin/actin-like_CS"/>
</dbReference>
<dbReference type="InterPro" id="IPR004001">
    <property type="entry name" value="Actin_CS"/>
</dbReference>
<dbReference type="InterPro" id="IPR043129">
    <property type="entry name" value="ATPase_NBD"/>
</dbReference>
<dbReference type="PANTHER" id="PTHR11937">
    <property type="entry name" value="ACTIN"/>
    <property type="match status" value="1"/>
</dbReference>
<dbReference type="Pfam" id="PF00022">
    <property type="entry name" value="Actin"/>
    <property type="match status" value="1"/>
</dbReference>
<dbReference type="PRINTS" id="PR00190">
    <property type="entry name" value="ACTIN"/>
</dbReference>
<dbReference type="SMART" id="SM00268">
    <property type="entry name" value="ACTIN"/>
    <property type="match status" value="1"/>
</dbReference>
<dbReference type="SUPFAM" id="SSF53067">
    <property type="entry name" value="Actin-like ATPase domain"/>
    <property type="match status" value="2"/>
</dbReference>
<dbReference type="PROSITE" id="PS00406">
    <property type="entry name" value="ACTINS_1"/>
    <property type="match status" value="1"/>
</dbReference>
<dbReference type="PROSITE" id="PS01132">
    <property type="entry name" value="ACTINS_ACT_LIKE"/>
    <property type="match status" value="1"/>
</dbReference>
<evidence type="ECO:0000250" key="1">
    <source>
        <dbReference type="UniProtKB" id="P68137"/>
    </source>
</evidence>
<evidence type="ECO:0000305" key="2"/>
<proteinExistence type="inferred from homology"/>
<sequence length="336" mass="37370">AGFAGDDAPRAVFPSIVGRPRYTGVMVGMGQKDAYVGDEAQSKRGILTLKYPIEHGIVSNWDDMEKIWHHTFYNELRVAPEEHPLLLTEAPLNPKANREKMTEIMFETFNVPAMYVAIQAVLSLYASGRTTGIVLDSGDGVSHTVPIYEGYALPHAILRLDLAGRDLTDYLMKILTERGYSFTTAAEREIVRDLKEKLAYVSLVFEQELETSKNSKDVEKSYELPDGQIITIGAERFRCPEVLFQPSFIGMEAVGIHETTYNSIMKCDVDIRKDLYGNVVLSGGSTMFPGITDRMSKEISALAPNSMKIKVVAPPERKYSVWIGGSILASLSTFQQ</sequence>
<name>ACT2_TOBAC</name>
<feature type="chain" id="PRO_0000089038" description="Actin-53">
    <location>
        <begin position="1" status="less than"/>
        <end position="336" status="greater than"/>
    </location>
</feature>
<feature type="non-terminal residue">
    <location>
        <position position="1"/>
    </location>
</feature>
<feature type="non-terminal residue">
    <location>
        <position position="336"/>
    </location>
</feature>
<keyword id="KW-0067">ATP-binding</keyword>
<keyword id="KW-0963">Cytoplasm</keyword>
<keyword id="KW-0206">Cytoskeleton</keyword>
<keyword id="KW-0378">Hydrolase</keyword>
<keyword id="KW-0547">Nucleotide-binding</keyword>
<keyword id="KW-1185">Reference proteome</keyword>
<protein>
    <recommendedName>
        <fullName>Actin-53</fullName>
        <ecNumber evidence="1">3.6.4.-</ecNumber>
    </recommendedName>
</protein>
<accession>P93374</accession>
<reference key="1">
    <citation type="journal article" date="1996" name="Mol. Biol. Evol.">
        <title>Phylogeny and substitution rates of angiosperm actin genes.</title>
        <authorList>
            <person name="Moniz de Sa M."/>
            <person name="Drouin G."/>
        </authorList>
    </citation>
    <scope>NUCLEOTIDE SEQUENCE [GENOMIC DNA]</scope>
</reference>
<comment type="function">
    <text>Actins are highly conserved proteins that are involved in various types of cell motility and are ubiquitously expressed in all eukaryotic cells. Essential component of cell cytoskeleton; plays an important role in cytoplasmic streaming, cell shape determination, cell division, organelle movement and extension growth.</text>
</comment>
<comment type="catalytic activity">
    <reaction evidence="1">
        <text>ATP + H2O = ADP + phosphate + H(+)</text>
        <dbReference type="Rhea" id="RHEA:13065"/>
        <dbReference type="ChEBI" id="CHEBI:15377"/>
        <dbReference type="ChEBI" id="CHEBI:15378"/>
        <dbReference type="ChEBI" id="CHEBI:30616"/>
        <dbReference type="ChEBI" id="CHEBI:43474"/>
        <dbReference type="ChEBI" id="CHEBI:456216"/>
    </reaction>
</comment>
<comment type="subcellular location">
    <subcellularLocation>
        <location>Cytoplasm</location>
        <location>Cytoskeleton</location>
    </subcellularLocation>
</comment>
<comment type="miscellaneous">
    <text>There are at least 7 different actin genes in tobacco.</text>
</comment>
<comment type="similarity">
    <text evidence="2">Belongs to the actin family.</text>
</comment>
<organism>
    <name type="scientific">Nicotiana tabacum</name>
    <name type="common">Common tobacco</name>
    <dbReference type="NCBI Taxonomy" id="4097"/>
    <lineage>
        <taxon>Eukaryota</taxon>
        <taxon>Viridiplantae</taxon>
        <taxon>Streptophyta</taxon>
        <taxon>Embryophyta</taxon>
        <taxon>Tracheophyta</taxon>
        <taxon>Spermatophyta</taxon>
        <taxon>Magnoliopsida</taxon>
        <taxon>eudicotyledons</taxon>
        <taxon>Gunneridae</taxon>
        <taxon>Pentapetalae</taxon>
        <taxon>asterids</taxon>
        <taxon>lamiids</taxon>
        <taxon>Solanales</taxon>
        <taxon>Solanaceae</taxon>
        <taxon>Nicotianoideae</taxon>
        <taxon>Nicotianeae</taxon>
        <taxon>Nicotiana</taxon>
    </lineage>
</organism>